<keyword id="KW-1003">Cell membrane</keyword>
<keyword id="KW-0378">Hydrolase</keyword>
<keyword id="KW-0472">Membrane</keyword>
<keyword id="KW-0645">Protease</keyword>
<keyword id="KW-0720">Serine protease</keyword>
<keyword id="KW-0812">Transmembrane</keyword>
<keyword id="KW-1133">Transmembrane helix</keyword>
<gene>
    <name type="ordered locus">SACOL1455</name>
</gene>
<accession>Q5HG01</accession>
<organism>
    <name type="scientific">Staphylococcus aureus (strain COL)</name>
    <dbReference type="NCBI Taxonomy" id="93062"/>
    <lineage>
        <taxon>Bacteria</taxon>
        <taxon>Bacillati</taxon>
        <taxon>Bacillota</taxon>
        <taxon>Bacilli</taxon>
        <taxon>Bacillales</taxon>
        <taxon>Staphylococcaceae</taxon>
        <taxon>Staphylococcus</taxon>
    </lineage>
</organism>
<protein>
    <recommendedName>
        <fullName>Probable CtpA-like serine protease</fullName>
        <ecNumber>3.4.21.-</ecNumber>
    </recommendedName>
</protein>
<comment type="subcellular location">
    <subcellularLocation>
        <location evidence="5">Cell membrane</location>
        <topology evidence="5">Single-pass membrane protein</topology>
    </subcellularLocation>
</comment>
<comment type="similarity">
    <text evidence="5">Belongs to the peptidase S41A family.</text>
</comment>
<name>CTPAL_STAAC</name>
<sequence length="496" mass="55277">MDDKQHTSSSDDERAEIATSNQDQETNSSKRVHLKRWQFISILIGTILITAVITVVAYIFINQKISGLNKTDQSNLNKIENVYKILNSDYYKKQDSDKLSKAAIDGMVKELKDPYSEYLTKEQTKSFNEGVSGDFVGIGAEMQKKNDQIMVTSPMKGSPAERAGIRPKDVITKVNGKSIKGKALDEVVKDVRGKENTEVTLTVQRGSEEKDVKIKREKIHVKSVEYKKKGKVGVITINKFQNDTSGELKDAVLKAHKDGLKKIVLDLRNNPGGLLDEAVKMANIFIDKGKTVVKLEKGKDTEAIQTSNDALKEAKDMDISILVNEGSASASEVFTGALKDYNKAKVYGSKTFGKGVVQTTREFKDGSLLKYTEMKWLTPDGHYIHGKGIKPDVTIDTPKYQSLNVIPNTKTFKVGDDDKNIKTIKIGLSALGYKVDNESTQFDKALENQVKAFQQANKLEVTGEFNKETNNKFTELLVEKANKHDDVLDKLINILK</sequence>
<dbReference type="EC" id="3.4.21.-"/>
<dbReference type="EMBL" id="CP000046">
    <property type="protein sequence ID" value="AAW36658.1"/>
    <property type="molecule type" value="Genomic_DNA"/>
</dbReference>
<dbReference type="RefSeq" id="WP_000342130.1">
    <property type="nucleotide sequence ID" value="NC_002951.2"/>
</dbReference>
<dbReference type="SMR" id="Q5HG01"/>
<dbReference type="KEGG" id="sac:SACOL1455"/>
<dbReference type="HOGENOM" id="CLU_017295_3_0_9"/>
<dbReference type="Proteomes" id="UP000000530">
    <property type="component" value="Chromosome"/>
</dbReference>
<dbReference type="GO" id="GO:0030288">
    <property type="term" value="C:outer membrane-bounded periplasmic space"/>
    <property type="evidence" value="ECO:0007669"/>
    <property type="project" value="TreeGrafter"/>
</dbReference>
<dbReference type="GO" id="GO:0005886">
    <property type="term" value="C:plasma membrane"/>
    <property type="evidence" value="ECO:0007669"/>
    <property type="project" value="UniProtKB-SubCell"/>
</dbReference>
<dbReference type="GO" id="GO:0004175">
    <property type="term" value="F:endopeptidase activity"/>
    <property type="evidence" value="ECO:0007669"/>
    <property type="project" value="TreeGrafter"/>
</dbReference>
<dbReference type="GO" id="GO:0008236">
    <property type="term" value="F:serine-type peptidase activity"/>
    <property type="evidence" value="ECO:0007669"/>
    <property type="project" value="UniProtKB-KW"/>
</dbReference>
<dbReference type="GO" id="GO:0006508">
    <property type="term" value="P:proteolysis"/>
    <property type="evidence" value="ECO:0007669"/>
    <property type="project" value="UniProtKB-KW"/>
</dbReference>
<dbReference type="GO" id="GO:0007165">
    <property type="term" value="P:signal transduction"/>
    <property type="evidence" value="ECO:0007669"/>
    <property type="project" value="TreeGrafter"/>
</dbReference>
<dbReference type="CDD" id="cd06782">
    <property type="entry name" value="cpPDZ_CPP-like"/>
    <property type="match status" value="1"/>
</dbReference>
<dbReference type="CDD" id="cd07560">
    <property type="entry name" value="Peptidase_S41_CPP"/>
    <property type="match status" value="1"/>
</dbReference>
<dbReference type="FunFam" id="2.30.42.10:FF:000063">
    <property type="entry name" value="Peptidase, S41 family"/>
    <property type="match status" value="1"/>
</dbReference>
<dbReference type="FunFam" id="3.30.750.44:FF:000001">
    <property type="entry name" value="S41 family peptidase"/>
    <property type="match status" value="1"/>
</dbReference>
<dbReference type="Gene3D" id="2.30.42.10">
    <property type="match status" value="1"/>
</dbReference>
<dbReference type="Gene3D" id="3.30.750.44">
    <property type="match status" value="1"/>
</dbReference>
<dbReference type="Gene3D" id="3.90.226.10">
    <property type="entry name" value="2-enoyl-CoA Hydratase, Chain A, domain 1"/>
    <property type="match status" value="1"/>
</dbReference>
<dbReference type="Gene3D" id="1.10.101.10">
    <property type="entry name" value="PGBD-like superfamily/PGBD"/>
    <property type="match status" value="1"/>
</dbReference>
<dbReference type="InterPro" id="IPR029045">
    <property type="entry name" value="ClpP/crotonase-like_dom_sf"/>
</dbReference>
<dbReference type="InterPro" id="IPR055210">
    <property type="entry name" value="CtpA/B_N"/>
</dbReference>
<dbReference type="InterPro" id="IPR001478">
    <property type="entry name" value="PDZ"/>
</dbReference>
<dbReference type="InterPro" id="IPR041489">
    <property type="entry name" value="PDZ_6"/>
</dbReference>
<dbReference type="InterPro" id="IPR036034">
    <property type="entry name" value="PDZ_sf"/>
</dbReference>
<dbReference type="InterPro" id="IPR004447">
    <property type="entry name" value="Peptidase_S41A"/>
</dbReference>
<dbReference type="InterPro" id="IPR002477">
    <property type="entry name" value="Peptidoglycan-bd-like"/>
</dbReference>
<dbReference type="InterPro" id="IPR036365">
    <property type="entry name" value="PGBD-like_sf"/>
</dbReference>
<dbReference type="InterPro" id="IPR036366">
    <property type="entry name" value="PGBDSf"/>
</dbReference>
<dbReference type="InterPro" id="IPR005151">
    <property type="entry name" value="Tail-specific_protease"/>
</dbReference>
<dbReference type="NCBIfam" id="TIGR00225">
    <property type="entry name" value="prc"/>
    <property type="match status" value="1"/>
</dbReference>
<dbReference type="PANTHER" id="PTHR32060:SF30">
    <property type="entry name" value="CARBOXY-TERMINAL PROCESSING PROTEASE CTPA"/>
    <property type="match status" value="1"/>
</dbReference>
<dbReference type="PANTHER" id="PTHR32060">
    <property type="entry name" value="TAIL-SPECIFIC PROTEASE"/>
    <property type="match status" value="1"/>
</dbReference>
<dbReference type="Pfam" id="PF22694">
    <property type="entry name" value="CtpB_N-like"/>
    <property type="match status" value="1"/>
</dbReference>
<dbReference type="Pfam" id="PF17820">
    <property type="entry name" value="PDZ_6"/>
    <property type="match status" value="1"/>
</dbReference>
<dbReference type="Pfam" id="PF03572">
    <property type="entry name" value="Peptidase_S41"/>
    <property type="match status" value="1"/>
</dbReference>
<dbReference type="Pfam" id="PF01471">
    <property type="entry name" value="PG_binding_1"/>
    <property type="match status" value="1"/>
</dbReference>
<dbReference type="SMART" id="SM00228">
    <property type="entry name" value="PDZ"/>
    <property type="match status" value="1"/>
</dbReference>
<dbReference type="SMART" id="SM00245">
    <property type="entry name" value="TSPc"/>
    <property type="match status" value="1"/>
</dbReference>
<dbReference type="SUPFAM" id="SSF52096">
    <property type="entry name" value="ClpP/crotonase"/>
    <property type="match status" value="1"/>
</dbReference>
<dbReference type="SUPFAM" id="SSF50156">
    <property type="entry name" value="PDZ domain-like"/>
    <property type="match status" value="1"/>
</dbReference>
<dbReference type="SUPFAM" id="SSF47090">
    <property type="entry name" value="PGBD-like"/>
    <property type="match status" value="1"/>
</dbReference>
<dbReference type="PROSITE" id="PS50106">
    <property type="entry name" value="PDZ"/>
    <property type="match status" value="1"/>
</dbReference>
<reference key="1">
    <citation type="journal article" date="2005" name="J. Bacteriol.">
        <title>Insights on evolution of virulence and resistance from the complete genome analysis of an early methicillin-resistant Staphylococcus aureus strain and a biofilm-producing methicillin-resistant Staphylococcus epidermidis strain.</title>
        <authorList>
            <person name="Gill S.R."/>
            <person name="Fouts D.E."/>
            <person name="Archer G.L."/>
            <person name="Mongodin E.F."/>
            <person name="DeBoy R.T."/>
            <person name="Ravel J."/>
            <person name="Paulsen I.T."/>
            <person name="Kolonay J.F."/>
            <person name="Brinkac L.M."/>
            <person name="Beanan M.J."/>
            <person name="Dodson R.J."/>
            <person name="Daugherty S.C."/>
            <person name="Madupu R."/>
            <person name="Angiuoli S.V."/>
            <person name="Durkin A.S."/>
            <person name="Haft D.H."/>
            <person name="Vamathevan J.J."/>
            <person name="Khouri H."/>
            <person name="Utterback T.R."/>
            <person name="Lee C."/>
            <person name="Dimitrov G."/>
            <person name="Jiang L."/>
            <person name="Qin H."/>
            <person name="Weidman J."/>
            <person name="Tran K."/>
            <person name="Kang K.H."/>
            <person name="Hance I.R."/>
            <person name="Nelson K.E."/>
            <person name="Fraser C.M."/>
        </authorList>
    </citation>
    <scope>NUCLEOTIDE SEQUENCE [LARGE SCALE GENOMIC DNA]</scope>
    <source>
        <strain>COL</strain>
    </source>
</reference>
<feature type="chain" id="PRO_0000233189" description="Probable CtpA-like serine protease">
    <location>
        <begin position="1"/>
        <end position="496"/>
    </location>
</feature>
<feature type="transmembrane region" description="Helical" evidence="2">
    <location>
        <begin position="39"/>
        <end position="59"/>
    </location>
</feature>
<feature type="domain" description="PDZ" evidence="3">
    <location>
        <begin position="124"/>
        <end position="206"/>
    </location>
</feature>
<feature type="region of interest" description="Disordered" evidence="4">
    <location>
        <begin position="1"/>
        <end position="27"/>
    </location>
</feature>
<feature type="compositionally biased region" description="Basic and acidic residues" evidence="4">
    <location>
        <begin position="1"/>
        <end position="16"/>
    </location>
</feature>
<feature type="compositionally biased region" description="Polar residues" evidence="4">
    <location>
        <begin position="18"/>
        <end position="27"/>
    </location>
</feature>
<feature type="active site" description="Charge relay system" evidence="1">
    <location>
        <position position="329"/>
    </location>
</feature>
<feature type="active site" description="Charge relay system" evidence="1">
    <location>
        <position position="340"/>
    </location>
</feature>
<feature type="active site" description="Charge relay system" evidence="1">
    <location>
        <position position="354"/>
    </location>
</feature>
<evidence type="ECO:0000250" key="1"/>
<evidence type="ECO:0000255" key="2"/>
<evidence type="ECO:0000255" key="3">
    <source>
        <dbReference type="PROSITE-ProRule" id="PRU00143"/>
    </source>
</evidence>
<evidence type="ECO:0000256" key="4">
    <source>
        <dbReference type="SAM" id="MobiDB-lite"/>
    </source>
</evidence>
<evidence type="ECO:0000305" key="5"/>
<proteinExistence type="inferred from homology"/>